<gene>
    <name evidence="1" type="primary">clpX</name>
    <name type="ordered locus">Mflv_2591</name>
</gene>
<reference key="1">
    <citation type="submission" date="2007-04" db="EMBL/GenBank/DDBJ databases">
        <title>Complete sequence of chromosome of Mycobacterium gilvum PYR-GCK.</title>
        <authorList>
            <consortium name="US DOE Joint Genome Institute"/>
            <person name="Copeland A."/>
            <person name="Lucas S."/>
            <person name="Lapidus A."/>
            <person name="Barry K."/>
            <person name="Detter J.C."/>
            <person name="Glavina del Rio T."/>
            <person name="Hammon N."/>
            <person name="Israni S."/>
            <person name="Dalin E."/>
            <person name="Tice H."/>
            <person name="Pitluck S."/>
            <person name="Chain P."/>
            <person name="Malfatti S."/>
            <person name="Shin M."/>
            <person name="Vergez L."/>
            <person name="Schmutz J."/>
            <person name="Larimer F."/>
            <person name="Land M."/>
            <person name="Hauser L."/>
            <person name="Kyrpides N."/>
            <person name="Mikhailova N."/>
            <person name="Miller C."/>
            <person name="Richardson P."/>
        </authorList>
    </citation>
    <scope>NUCLEOTIDE SEQUENCE [LARGE SCALE GENOMIC DNA]</scope>
    <source>
        <strain>PYR-GCK</strain>
    </source>
</reference>
<evidence type="ECO:0000255" key="1">
    <source>
        <dbReference type="HAMAP-Rule" id="MF_00175"/>
    </source>
</evidence>
<evidence type="ECO:0000255" key="2">
    <source>
        <dbReference type="PROSITE-ProRule" id="PRU01250"/>
    </source>
</evidence>
<comment type="function">
    <text evidence="1">ATP-dependent specificity component of the Clp protease. It directs the protease to specific substrates. Can perform chaperone functions in the absence of ClpP.</text>
</comment>
<comment type="subunit">
    <text evidence="1">Component of the ClpX-ClpP complex. Forms a hexameric ring that, in the presence of ATP, binds to fourteen ClpP subunits assembled into a disk-like structure with a central cavity, resembling the structure of eukaryotic proteasomes.</text>
</comment>
<comment type="similarity">
    <text evidence="1">Belongs to the ClpX chaperone family.</text>
</comment>
<dbReference type="EMBL" id="CP000656">
    <property type="protein sequence ID" value="ABP45068.1"/>
    <property type="molecule type" value="Genomic_DNA"/>
</dbReference>
<dbReference type="SMR" id="A4T2N8"/>
<dbReference type="STRING" id="350054.Mflv_2591"/>
<dbReference type="KEGG" id="mgi:Mflv_2591"/>
<dbReference type="eggNOG" id="COG1219">
    <property type="taxonomic scope" value="Bacteria"/>
</dbReference>
<dbReference type="HOGENOM" id="CLU_014218_8_2_11"/>
<dbReference type="OrthoDB" id="9804062at2"/>
<dbReference type="GO" id="GO:0009376">
    <property type="term" value="C:HslUV protease complex"/>
    <property type="evidence" value="ECO:0007669"/>
    <property type="project" value="TreeGrafter"/>
</dbReference>
<dbReference type="GO" id="GO:0005524">
    <property type="term" value="F:ATP binding"/>
    <property type="evidence" value="ECO:0007669"/>
    <property type="project" value="UniProtKB-UniRule"/>
</dbReference>
<dbReference type="GO" id="GO:0016887">
    <property type="term" value="F:ATP hydrolysis activity"/>
    <property type="evidence" value="ECO:0007669"/>
    <property type="project" value="InterPro"/>
</dbReference>
<dbReference type="GO" id="GO:0140662">
    <property type="term" value="F:ATP-dependent protein folding chaperone"/>
    <property type="evidence" value="ECO:0007669"/>
    <property type="project" value="InterPro"/>
</dbReference>
<dbReference type="GO" id="GO:0046983">
    <property type="term" value="F:protein dimerization activity"/>
    <property type="evidence" value="ECO:0007669"/>
    <property type="project" value="InterPro"/>
</dbReference>
<dbReference type="GO" id="GO:0051082">
    <property type="term" value="F:unfolded protein binding"/>
    <property type="evidence" value="ECO:0007669"/>
    <property type="project" value="UniProtKB-UniRule"/>
</dbReference>
<dbReference type="GO" id="GO:0008270">
    <property type="term" value="F:zinc ion binding"/>
    <property type="evidence" value="ECO:0007669"/>
    <property type="project" value="InterPro"/>
</dbReference>
<dbReference type="GO" id="GO:0051301">
    <property type="term" value="P:cell division"/>
    <property type="evidence" value="ECO:0007669"/>
    <property type="project" value="TreeGrafter"/>
</dbReference>
<dbReference type="GO" id="GO:0051603">
    <property type="term" value="P:proteolysis involved in protein catabolic process"/>
    <property type="evidence" value="ECO:0007669"/>
    <property type="project" value="TreeGrafter"/>
</dbReference>
<dbReference type="CDD" id="cd19497">
    <property type="entry name" value="RecA-like_ClpX"/>
    <property type="match status" value="1"/>
</dbReference>
<dbReference type="FunFam" id="1.10.8.60:FF:000002">
    <property type="entry name" value="ATP-dependent Clp protease ATP-binding subunit ClpX"/>
    <property type="match status" value="1"/>
</dbReference>
<dbReference type="FunFam" id="3.40.50.300:FF:000005">
    <property type="entry name" value="ATP-dependent Clp protease ATP-binding subunit ClpX"/>
    <property type="match status" value="1"/>
</dbReference>
<dbReference type="Gene3D" id="1.10.8.60">
    <property type="match status" value="1"/>
</dbReference>
<dbReference type="Gene3D" id="6.20.220.10">
    <property type="entry name" value="ClpX chaperone, C4-type zinc finger domain"/>
    <property type="match status" value="1"/>
</dbReference>
<dbReference type="Gene3D" id="3.40.50.300">
    <property type="entry name" value="P-loop containing nucleotide triphosphate hydrolases"/>
    <property type="match status" value="1"/>
</dbReference>
<dbReference type="HAMAP" id="MF_00175">
    <property type="entry name" value="ClpX"/>
    <property type="match status" value="1"/>
</dbReference>
<dbReference type="InterPro" id="IPR003593">
    <property type="entry name" value="AAA+_ATPase"/>
</dbReference>
<dbReference type="InterPro" id="IPR050052">
    <property type="entry name" value="ATP-dep_Clp_protease_ClpX"/>
</dbReference>
<dbReference type="InterPro" id="IPR003959">
    <property type="entry name" value="ATPase_AAA_core"/>
</dbReference>
<dbReference type="InterPro" id="IPR019489">
    <property type="entry name" value="Clp_ATPase_C"/>
</dbReference>
<dbReference type="InterPro" id="IPR004487">
    <property type="entry name" value="Clp_protease_ATP-bd_su_ClpX"/>
</dbReference>
<dbReference type="InterPro" id="IPR046425">
    <property type="entry name" value="ClpX_bact"/>
</dbReference>
<dbReference type="InterPro" id="IPR027417">
    <property type="entry name" value="P-loop_NTPase"/>
</dbReference>
<dbReference type="InterPro" id="IPR010603">
    <property type="entry name" value="Znf_CppX_C4"/>
</dbReference>
<dbReference type="InterPro" id="IPR038366">
    <property type="entry name" value="Znf_CppX_C4_sf"/>
</dbReference>
<dbReference type="NCBIfam" id="TIGR00382">
    <property type="entry name" value="clpX"/>
    <property type="match status" value="1"/>
</dbReference>
<dbReference type="NCBIfam" id="NF003745">
    <property type="entry name" value="PRK05342.1"/>
    <property type="match status" value="1"/>
</dbReference>
<dbReference type="PANTHER" id="PTHR48102:SF7">
    <property type="entry name" value="ATP-DEPENDENT CLP PROTEASE ATP-BINDING SUBUNIT CLPX-LIKE, MITOCHONDRIAL"/>
    <property type="match status" value="1"/>
</dbReference>
<dbReference type="PANTHER" id="PTHR48102">
    <property type="entry name" value="ATP-DEPENDENT CLP PROTEASE ATP-BINDING SUBUNIT CLPX-LIKE, MITOCHONDRIAL-RELATED"/>
    <property type="match status" value="1"/>
</dbReference>
<dbReference type="Pfam" id="PF07724">
    <property type="entry name" value="AAA_2"/>
    <property type="match status" value="1"/>
</dbReference>
<dbReference type="Pfam" id="PF10431">
    <property type="entry name" value="ClpB_D2-small"/>
    <property type="match status" value="1"/>
</dbReference>
<dbReference type="Pfam" id="PF06689">
    <property type="entry name" value="zf-C4_ClpX"/>
    <property type="match status" value="1"/>
</dbReference>
<dbReference type="SMART" id="SM00382">
    <property type="entry name" value="AAA"/>
    <property type="match status" value="1"/>
</dbReference>
<dbReference type="SMART" id="SM01086">
    <property type="entry name" value="ClpB_D2-small"/>
    <property type="match status" value="1"/>
</dbReference>
<dbReference type="SMART" id="SM00994">
    <property type="entry name" value="zf-C4_ClpX"/>
    <property type="match status" value="1"/>
</dbReference>
<dbReference type="SUPFAM" id="SSF57716">
    <property type="entry name" value="Glucocorticoid receptor-like (DNA-binding domain)"/>
    <property type="match status" value="1"/>
</dbReference>
<dbReference type="SUPFAM" id="SSF52540">
    <property type="entry name" value="P-loop containing nucleoside triphosphate hydrolases"/>
    <property type="match status" value="1"/>
</dbReference>
<dbReference type="PROSITE" id="PS51902">
    <property type="entry name" value="CLPX_ZB"/>
    <property type="match status" value="1"/>
</dbReference>
<keyword id="KW-0067">ATP-binding</keyword>
<keyword id="KW-0143">Chaperone</keyword>
<keyword id="KW-0479">Metal-binding</keyword>
<keyword id="KW-0547">Nucleotide-binding</keyword>
<keyword id="KW-0862">Zinc</keyword>
<name>CLPX_MYCGI</name>
<proteinExistence type="inferred from homology"/>
<protein>
    <recommendedName>
        <fullName evidence="1">ATP-dependent Clp protease ATP-binding subunit ClpX</fullName>
    </recommendedName>
</protein>
<accession>A4T2N8</accession>
<sequence>MARIGDGGDLLKCSFCGKSQKQVKKLIAGPGVYICDECIDLCNEIIEEELADADDVKLDELPKPAEIRDFLEGYVIGQDTAKRTLAVAVYNHYKRIQAGEKARDSRAEPVELAKSNILMLGPTGCGKTYLAQTLAKMLNVPFAIADATALTEAGYVGEDVENILLKLIQAADYDVKRAETGIIYIDEVDKIARKSENPSITRDVSGEGVQQALLKILEGTQASVPPQGGRKHPHQEFIQIDTTNVLFIVAGAFAGLEKIVSDRVGKRGLGFGAEVHSKAEIDTQDHFAEVMPEDLIKFGLIPEFIGRLPVVASVTNLDKESLVKILSEPKNALVKQYTRLFEMDGVELEFAEDALEAIADQAIHRGTGARGLRAIMEEVLLPVMYDIPSRDDVAKVVVTKETVDDNVLPTIVPRKPSRSERRDKTA</sequence>
<organism>
    <name type="scientific">Mycolicibacterium gilvum (strain PYR-GCK)</name>
    <name type="common">Mycobacterium gilvum (strain PYR-GCK)</name>
    <dbReference type="NCBI Taxonomy" id="350054"/>
    <lineage>
        <taxon>Bacteria</taxon>
        <taxon>Bacillati</taxon>
        <taxon>Actinomycetota</taxon>
        <taxon>Actinomycetes</taxon>
        <taxon>Mycobacteriales</taxon>
        <taxon>Mycobacteriaceae</taxon>
        <taxon>Mycolicibacterium</taxon>
    </lineage>
</organism>
<feature type="chain" id="PRO_1000077164" description="ATP-dependent Clp protease ATP-binding subunit ClpX">
    <location>
        <begin position="1"/>
        <end position="426"/>
    </location>
</feature>
<feature type="domain" description="ClpX-type ZB" evidence="2">
    <location>
        <begin position="1"/>
        <end position="54"/>
    </location>
</feature>
<feature type="binding site" evidence="2">
    <location>
        <position position="13"/>
    </location>
    <ligand>
        <name>Zn(2+)</name>
        <dbReference type="ChEBI" id="CHEBI:29105"/>
    </ligand>
</feature>
<feature type="binding site" evidence="2">
    <location>
        <position position="16"/>
    </location>
    <ligand>
        <name>Zn(2+)</name>
        <dbReference type="ChEBI" id="CHEBI:29105"/>
    </ligand>
</feature>
<feature type="binding site" evidence="2">
    <location>
        <position position="35"/>
    </location>
    <ligand>
        <name>Zn(2+)</name>
        <dbReference type="ChEBI" id="CHEBI:29105"/>
    </ligand>
</feature>
<feature type="binding site" evidence="2">
    <location>
        <position position="38"/>
    </location>
    <ligand>
        <name>Zn(2+)</name>
        <dbReference type="ChEBI" id="CHEBI:29105"/>
    </ligand>
</feature>
<feature type="binding site" evidence="1">
    <location>
        <begin position="122"/>
        <end position="129"/>
    </location>
    <ligand>
        <name>ATP</name>
        <dbReference type="ChEBI" id="CHEBI:30616"/>
    </ligand>
</feature>